<proteinExistence type="evidence at protein level"/>
<accession>Q63454</accession>
<protein>
    <recommendedName>
        <fullName>Mitogen-activated protein kinase 4</fullName>
        <shortName>MAP kinase 4</shortName>
        <shortName>MAPK 4</shortName>
        <ecNumber>2.7.11.24</ecNumber>
    </recommendedName>
    <alternativeName>
        <fullName>Extracellular signal-regulated kinase 4</fullName>
        <shortName>ERK-4</shortName>
    </alternativeName>
    <alternativeName>
        <fullName>MAP kinase isoform p63</fullName>
        <shortName>p63-MAPK</shortName>
    </alternativeName>
    <alternativeName>
        <fullName>MNK2</fullName>
    </alternativeName>
</protein>
<keyword id="KW-0067">ATP-binding</keyword>
<keyword id="KW-0131">Cell cycle</keyword>
<keyword id="KW-0963">Cytoplasm</keyword>
<keyword id="KW-0418">Kinase</keyword>
<keyword id="KW-0547">Nucleotide-binding</keyword>
<keyword id="KW-0539">Nucleus</keyword>
<keyword id="KW-0597">Phosphoprotein</keyword>
<keyword id="KW-1185">Reference proteome</keyword>
<keyword id="KW-0723">Serine/threonine-protein kinase</keyword>
<keyword id="KW-0808">Transferase</keyword>
<gene>
    <name type="primary">Mapk4</name>
    <name type="synonym">Prkm4</name>
</gene>
<comment type="function">
    <text evidence="1">Atypical MAPK protein. Phosphorylates microtubule-associated protein 2 (MAP2) and MAPKAPK5. The precise role of the complex formed with MAPKAPK5 is still unclear, but the complex follows a complex set of phosphorylation events: upon interaction with atypical MAPKAPK5, ERK4/MAPK4 is phosphorylated and then mediates phosphorylation and activation of MAPKAPK5, which in turn phosphorylates ERK4/MAPK4. May promote entry in the cell cycle (By similarity).</text>
</comment>
<comment type="catalytic activity">
    <reaction>
        <text>L-seryl-[protein] + ATP = O-phospho-L-seryl-[protein] + ADP + H(+)</text>
        <dbReference type="Rhea" id="RHEA:17989"/>
        <dbReference type="Rhea" id="RHEA-COMP:9863"/>
        <dbReference type="Rhea" id="RHEA-COMP:11604"/>
        <dbReference type="ChEBI" id="CHEBI:15378"/>
        <dbReference type="ChEBI" id="CHEBI:29999"/>
        <dbReference type="ChEBI" id="CHEBI:30616"/>
        <dbReference type="ChEBI" id="CHEBI:83421"/>
        <dbReference type="ChEBI" id="CHEBI:456216"/>
        <dbReference type="EC" id="2.7.11.24"/>
    </reaction>
</comment>
<comment type="catalytic activity">
    <reaction>
        <text>L-threonyl-[protein] + ATP = O-phospho-L-threonyl-[protein] + ADP + H(+)</text>
        <dbReference type="Rhea" id="RHEA:46608"/>
        <dbReference type="Rhea" id="RHEA-COMP:11060"/>
        <dbReference type="Rhea" id="RHEA-COMP:11605"/>
        <dbReference type="ChEBI" id="CHEBI:15378"/>
        <dbReference type="ChEBI" id="CHEBI:30013"/>
        <dbReference type="ChEBI" id="CHEBI:30616"/>
        <dbReference type="ChEBI" id="CHEBI:61977"/>
        <dbReference type="ChEBI" id="CHEBI:456216"/>
        <dbReference type="EC" id="2.7.11.24"/>
    </reaction>
</comment>
<comment type="cofactor">
    <cofactor evidence="1">
        <name>Mg(2+)</name>
        <dbReference type="ChEBI" id="CHEBI:18420"/>
    </cofactor>
</comment>
<comment type="activity regulation">
    <text evidence="1">Activated by phosphorylation in the activation loop.</text>
</comment>
<comment type="subunit">
    <text evidence="1">Homodimer. Heterodimer with ERK3/MAPK6. Interacts with MAPKAPK5 (By similarity).</text>
</comment>
<comment type="subcellular location">
    <subcellularLocation>
        <location evidence="1">Cytoplasm</location>
    </subcellularLocation>
    <subcellularLocation>
        <location evidence="1">Nucleus</location>
    </subcellularLocation>
    <text evidence="1">Translocates to the cytoplasm following interaction with MAPKAPK5.</text>
</comment>
<comment type="tissue specificity">
    <text>Exclusively detected in the brain, where expression is restricted to the choroid plexus and hippocampus, and to a lesser extent in lung.</text>
</comment>
<comment type="domain">
    <text evidence="1">In contrast to classical MAPKs, the TXY motif within the activation loop is replaced by the SEG motif, whose phosphorylation activates the MAP kinases.</text>
</comment>
<comment type="PTM">
    <text evidence="1">Phosphorylated by PAK1, PAK2 and PAK3 in the activation loop resulting in catalytic activation. Phosphorylated by MAPKAPK5 at other sites (By similarity).</text>
</comment>
<comment type="similarity">
    <text evidence="4">Belongs to the protein kinase superfamily. CMGC Ser/Thr protein kinase family. MAP kinase subfamily.</text>
</comment>
<feature type="chain" id="PRO_0000186256" description="Mitogen-activated protein kinase 4">
    <location>
        <begin position="1" status="less than"/>
        <end position="274" status="greater than"/>
    </location>
</feature>
<feature type="domain" description="Protein kinase" evidence="2">
    <location>
        <begin position="1" status="less than"/>
        <end position="274" status="greater than"/>
    </location>
</feature>
<feature type="short sequence motif" description="SEG motif">
    <location>
        <begin position="160"/>
        <end position="162"/>
    </location>
</feature>
<feature type="active site" description="Proton acceptor" evidence="2 3">
    <location>
        <position position="123"/>
    </location>
</feature>
<feature type="binding site" evidence="2">
    <location>
        <begin position="1" status="less than"/>
        <end position="8"/>
    </location>
    <ligand>
        <name>ATP</name>
        <dbReference type="ChEBI" id="CHEBI:30616"/>
    </ligand>
</feature>
<feature type="binding site" evidence="2">
    <location>
        <position position="23"/>
    </location>
    <ligand>
        <name>ATP</name>
        <dbReference type="ChEBI" id="CHEBI:30616"/>
    </ligand>
</feature>
<feature type="modified residue" description="Phosphoserine" evidence="5">
    <location>
        <position position="160"/>
    </location>
</feature>
<feature type="non-terminal residue">
    <location>
        <position position="1"/>
    </location>
</feature>
<feature type="non-terminal residue">
    <location>
        <position position="274"/>
    </location>
</feature>
<reference key="1">
    <citation type="journal article" date="1996" name="Mamm. Genome">
        <title>Isolation of a cDNA encoding the rat MAP-kinase homolog of human p63mapk.</title>
        <authorList>
            <person name="Garcia J.I."/>
            <person name="Zalba G."/>
            <person name="Detera-Wadleigh S.D."/>
            <person name="de Miguel C."/>
        </authorList>
    </citation>
    <scope>NUCLEOTIDE SEQUENCE [MRNA]</scope>
    <source>
        <strain>Wistar</strain>
        <tissue>Corpus striatum</tissue>
    </source>
</reference>
<reference key="2">
    <citation type="journal article" date="2012" name="Nat. Commun.">
        <title>Quantitative maps of protein phosphorylation sites across 14 different rat organs and tissues.</title>
        <authorList>
            <person name="Lundby A."/>
            <person name="Secher A."/>
            <person name="Lage K."/>
            <person name="Nordsborg N.B."/>
            <person name="Dmytriyev A."/>
            <person name="Lundby C."/>
            <person name="Olsen J.V."/>
        </authorList>
    </citation>
    <scope>PHOSPHORYLATION [LARGE SCALE ANALYSIS] AT SER-160</scope>
    <scope>IDENTIFICATION BY MASS SPECTROMETRY [LARGE SCALE ANALYSIS]</scope>
</reference>
<sequence>GCGGNGLVLSATDSRACRKVAVKKIVLSDARSMKHALREIKIIRRLDHDNIVKVYEVLGPKGSDLQGELFKFSVAYIVQEYMETDLACLLEQGTLTEEHAKLFMYQLLRGLKYIHSANVLHRDLKPANIFISTEDLVLKIGDFGLARIADQHYSHKGYLSEGLVTKWYRSPRLLLSPNNYTKAIDMWAAGCILAEMLTGKMLFAGAHELEQMQLILDTIPVVREEDKEELLRVMPSFVSSTWEVKRPLRKLLPDVNREAIDFLEKILTFSPMDR</sequence>
<evidence type="ECO:0000250" key="1"/>
<evidence type="ECO:0000255" key="2">
    <source>
        <dbReference type="PROSITE-ProRule" id="PRU00159"/>
    </source>
</evidence>
<evidence type="ECO:0000255" key="3">
    <source>
        <dbReference type="PROSITE-ProRule" id="PRU10027"/>
    </source>
</evidence>
<evidence type="ECO:0000305" key="4"/>
<evidence type="ECO:0007744" key="5">
    <source>
    </source>
</evidence>
<organism>
    <name type="scientific">Rattus norvegicus</name>
    <name type="common">Rat</name>
    <dbReference type="NCBI Taxonomy" id="10116"/>
    <lineage>
        <taxon>Eukaryota</taxon>
        <taxon>Metazoa</taxon>
        <taxon>Chordata</taxon>
        <taxon>Craniata</taxon>
        <taxon>Vertebrata</taxon>
        <taxon>Euteleostomi</taxon>
        <taxon>Mammalia</taxon>
        <taxon>Eutheria</taxon>
        <taxon>Euarchontoglires</taxon>
        <taxon>Glires</taxon>
        <taxon>Rodentia</taxon>
        <taxon>Myomorpha</taxon>
        <taxon>Muroidea</taxon>
        <taxon>Muridae</taxon>
        <taxon>Murinae</taxon>
        <taxon>Rattus</taxon>
    </lineage>
</organism>
<name>MK04_RAT</name>
<dbReference type="EC" id="2.7.11.24"/>
<dbReference type="EMBL" id="Z21935">
    <property type="protein sequence ID" value="CAA79929.1"/>
    <property type="molecule type" value="mRNA"/>
</dbReference>
<dbReference type="PIR" id="S33178">
    <property type="entry name" value="S33178"/>
</dbReference>
<dbReference type="SMR" id="Q63454"/>
<dbReference type="FunCoup" id="Q63454">
    <property type="interactions" value="326"/>
</dbReference>
<dbReference type="IntAct" id="Q63454">
    <property type="interactions" value="1"/>
</dbReference>
<dbReference type="MINT" id="Q63454"/>
<dbReference type="STRING" id="10116.ENSRNOP00000050164"/>
<dbReference type="iPTMnet" id="Q63454"/>
<dbReference type="PaxDb" id="10116-ENSRNOP00000050164"/>
<dbReference type="AGR" id="RGD:3047"/>
<dbReference type="RGD" id="3047">
    <property type="gene designation" value="Mapk4"/>
</dbReference>
<dbReference type="eggNOG" id="KOG0660">
    <property type="taxonomic scope" value="Eukaryota"/>
</dbReference>
<dbReference type="InParanoid" id="Q63454"/>
<dbReference type="PhylomeDB" id="Q63454"/>
<dbReference type="Reactome" id="R-RNO-5687128">
    <property type="pathway name" value="MAPK6/MAPK4 signaling"/>
</dbReference>
<dbReference type="Proteomes" id="UP000002494">
    <property type="component" value="Unplaced"/>
</dbReference>
<dbReference type="GO" id="GO:0005737">
    <property type="term" value="C:cytoplasm"/>
    <property type="evidence" value="ECO:0000250"/>
    <property type="project" value="UniProtKB"/>
</dbReference>
<dbReference type="GO" id="GO:0005634">
    <property type="term" value="C:nucleus"/>
    <property type="evidence" value="ECO:0000250"/>
    <property type="project" value="UniProtKB"/>
</dbReference>
<dbReference type="GO" id="GO:0005524">
    <property type="term" value="F:ATP binding"/>
    <property type="evidence" value="ECO:0007669"/>
    <property type="project" value="UniProtKB-KW"/>
</dbReference>
<dbReference type="GO" id="GO:0004707">
    <property type="term" value="F:MAP kinase activity"/>
    <property type="evidence" value="ECO:0007669"/>
    <property type="project" value="UniProtKB-EC"/>
</dbReference>
<dbReference type="GO" id="GO:0046982">
    <property type="term" value="F:protein heterodimerization activity"/>
    <property type="evidence" value="ECO:0000266"/>
    <property type="project" value="RGD"/>
</dbReference>
<dbReference type="GO" id="GO:0042803">
    <property type="term" value="F:protein homodimerization activity"/>
    <property type="evidence" value="ECO:0000250"/>
    <property type="project" value="UniProtKB"/>
</dbReference>
<dbReference type="GO" id="GO:0019901">
    <property type="term" value="F:protein kinase binding"/>
    <property type="evidence" value="ECO:0000250"/>
    <property type="project" value="UniProtKB"/>
</dbReference>
<dbReference type="GO" id="GO:0106310">
    <property type="term" value="F:protein serine kinase activity"/>
    <property type="evidence" value="ECO:0007669"/>
    <property type="project" value="RHEA"/>
</dbReference>
<dbReference type="GO" id="GO:0004674">
    <property type="term" value="F:protein serine/threonine kinase activity"/>
    <property type="evidence" value="ECO:0000318"/>
    <property type="project" value="GO_Central"/>
</dbReference>
<dbReference type="GO" id="GO:0035556">
    <property type="term" value="P:intracellular signal transduction"/>
    <property type="evidence" value="ECO:0000318"/>
    <property type="project" value="GO_Central"/>
</dbReference>
<dbReference type="FunFam" id="3.30.200.20:FF:000281">
    <property type="entry name" value="Mitogen-activated protein kinase 4"/>
    <property type="match status" value="1"/>
</dbReference>
<dbReference type="FunFam" id="1.10.510.10:FF:000136">
    <property type="entry name" value="mitogen-activated protein kinase 6"/>
    <property type="match status" value="1"/>
</dbReference>
<dbReference type="Gene3D" id="3.30.200.20">
    <property type="entry name" value="Phosphorylase Kinase, domain 1"/>
    <property type="match status" value="1"/>
</dbReference>
<dbReference type="Gene3D" id="1.10.510.10">
    <property type="entry name" value="Transferase(Phosphotransferase) domain 1"/>
    <property type="match status" value="1"/>
</dbReference>
<dbReference type="InterPro" id="IPR011009">
    <property type="entry name" value="Kinase-like_dom_sf"/>
</dbReference>
<dbReference type="InterPro" id="IPR050117">
    <property type="entry name" value="MAP_kinase"/>
</dbReference>
<dbReference type="InterPro" id="IPR008350">
    <property type="entry name" value="MAPK_ERK3/4"/>
</dbReference>
<dbReference type="InterPro" id="IPR000719">
    <property type="entry name" value="Prot_kinase_dom"/>
</dbReference>
<dbReference type="InterPro" id="IPR008271">
    <property type="entry name" value="Ser/Thr_kinase_AS"/>
</dbReference>
<dbReference type="PANTHER" id="PTHR24055">
    <property type="entry name" value="MITOGEN-ACTIVATED PROTEIN KINASE"/>
    <property type="match status" value="1"/>
</dbReference>
<dbReference type="Pfam" id="PF00069">
    <property type="entry name" value="Pkinase"/>
    <property type="match status" value="1"/>
</dbReference>
<dbReference type="PRINTS" id="PR01771">
    <property type="entry name" value="ERK3ERK4MAPK"/>
</dbReference>
<dbReference type="SMART" id="SM00220">
    <property type="entry name" value="S_TKc"/>
    <property type="match status" value="1"/>
</dbReference>
<dbReference type="SUPFAM" id="SSF56112">
    <property type="entry name" value="Protein kinase-like (PK-like)"/>
    <property type="match status" value="1"/>
</dbReference>
<dbReference type="PROSITE" id="PS50011">
    <property type="entry name" value="PROTEIN_KINASE_DOM"/>
    <property type="match status" value="1"/>
</dbReference>
<dbReference type="PROSITE" id="PS00108">
    <property type="entry name" value="PROTEIN_KINASE_ST"/>
    <property type="match status" value="1"/>
</dbReference>